<sequence>MNLITTIIAITITLSAVLATVSFWLPQITPDAEKLSPYECGFDPLGSARLPFSLRFFLIAILFLLFDLEIALLLPLPWGDQLATPALTLAWSAAVLALLTLGLIYEWTQGGLEWAE</sequence>
<protein>
    <recommendedName>
        <fullName>NADH-ubiquinone oxidoreductase chain 3</fullName>
        <ecNumber>7.1.1.2</ecNumber>
    </recommendedName>
    <alternativeName>
        <fullName>NADH dehydrogenase subunit 3</fullName>
    </alternativeName>
</protein>
<organism>
    <name type="scientific">Salmo trutta</name>
    <name type="common">Brown trout</name>
    <dbReference type="NCBI Taxonomy" id="8032"/>
    <lineage>
        <taxon>Eukaryota</taxon>
        <taxon>Metazoa</taxon>
        <taxon>Chordata</taxon>
        <taxon>Craniata</taxon>
        <taxon>Vertebrata</taxon>
        <taxon>Euteleostomi</taxon>
        <taxon>Actinopterygii</taxon>
        <taxon>Neopterygii</taxon>
        <taxon>Teleostei</taxon>
        <taxon>Protacanthopterygii</taxon>
        <taxon>Salmoniformes</taxon>
        <taxon>Salmonidae</taxon>
        <taxon>Salmoninae</taxon>
        <taxon>Salmo</taxon>
    </lineage>
</organism>
<proteinExistence type="inferred from homology"/>
<dbReference type="EC" id="7.1.1.2"/>
<dbReference type="EMBL" id="U61181">
    <property type="protein sequence ID" value="AAB53967.1"/>
    <property type="molecule type" value="Genomic_DNA"/>
</dbReference>
<dbReference type="RefSeq" id="YP_009026996.1">
    <property type="nucleotide sequence ID" value="NC_024032.1"/>
</dbReference>
<dbReference type="SMR" id="O03252"/>
<dbReference type="Ensembl" id="ENSSTUT00000000026.1">
    <property type="protein sequence ID" value="ENSSTUP00000000009.1"/>
    <property type="gene ID" value="ENSSTUG00000000026.1"/>
</dbReference>
<dbReference type="GeneID" id="19099182"/>
<dbReference type="KEGG" id="stru:19099182"/>
<dbReference type="CTD" id="4537"/>
<dbReference type="GeneTree" id="ENSGT00390000011605"/>
<dbReference type="OMA" id="GPRRYNR"/>
<dbReference type="OrthoDB" id="154075at2759"/>
<dbReference type="Proteomes" id="UP000472277">
    <property type="component" value="Mitochondrion MT"/>
</dbReference>
<dbReference type="GO" id="GO:0031966">
    <property type="term" value="C:mitochondrial membrane"/>
    <property type="evidence" value="ECO:0007669"/>
    <property type="project" value="UniProtKB-SubCell"/>
</dbReference>
<dbReference type="GO" id="GO:0030964">
    <property type="term" value="C:NADH dehydrogenase complex"/>
    <property type="evidence" value="ECO:0007669"/>
    <property type="project" value="TreeGrafter"/>
</dbReference>
<dbReference type="GO" id="GO:0008137">
    <property type="term" value="F:NADH dehydrogenase (ubiquinone) activity"/>
    <property type="evidence" value="ECO:0007669"/>
    <property type="project" value="UniProtKB-EC"/>
</dbReference>
<dbReference type="FunFam" id="1.20.58.1610:FF:000004">
    <property type="entry name" value="NADH-quinone oxidoreductase subunit A"/>
    <property type="match status" value="1"/>
</dbReference>
<dbReference type="Gene3D" id="1.20.58.1610">
    <property type="entry name" value="NADH:ubiquinone/plastoquinone oxidoreductase, chain 3"/>
    <property type="match status" value="1"/>
</dbReference>
<dbReference type="InterPro" id="IPR000440">
    <property type="entry name" value="NADH_UbQ/plastoQ_OxRdtase_su3"/>
</dbReference>
<dbReference type="InterPro" id="IPR038430">
    <property type="entry name" value="NDAH_ubi_oxred_su3_sf"/>
</dbReference>
<dbReference type="PANTHER" id="PTHR11058">
    <property type="entry name" value="NADH-UBIQUINONE OXIDOREDUCTASE CHAIN 3"/>
    <property type="match status" value="1"/>
</dbReference>
<dbReference type="PANTHER" id="PTHR11058:SF9">
    <property type="entry name" value="NADH-UBIQUINONE OXIDOREDUCTASE CHAIN 3"/>
    <property type="match status" value="1"/>
</dbReference>
<dbReference type="Pfam" id="PF00507">
    <property type="entry name" value="Oxidored_q4"/>
    <property type="match status" value="1"/>
</dbReference>
<accession>O03252</accession>
<reference key="1">
    <citation type="submission" date="1996-06" db="EMBL/GenBank/DDBJ databases">
        <authorList>
            <person name="McKay S.J."/>
            <person name="Smith M.J."/>
            <person name="Devlin R.H."/>
        </authorList>
    </citation>
    <scope>NUCLEOTIDE SEQUENCE [GENOMIC DNA]</scope>
    <source>
        <strain>Vancouver Island</strain>
    </source>
</reference>
<feature type="chain" id="PRO_0000117827" description="NADH-ubiquinone oxidoreductase chain 3">
    <location>
        <begin position="1"/>
        <end position="116"/>
    </location>
</feature>
<feature type="transmembrane region" description="Helical" evidence="2">
    <location>
        <begin position="3"/>
        <end position="23"/>
    </location>
</feature>
<feature type="transmembrane region" description="Helical" evidence="2">
    <location>
        <begin position="56"/>
        <end position="76"/>
    </location>
</feature>
<feature type="transmembrane region" description="Helical" evidence="2">
    <location>
        <begin position="85"/>
        <end position="105"/>
    </location>
</feature>
<comment type="function">
    <text evidence="1">Core subunit of the mitochondrial membrane respiratory chain NADH dehydrogenase (Complex I) that is believed to belong to the minimal assembly required for catalysis. Complex I functions in the transfer of electrons from NADH to the respiratory chain. The immediate electron acceptor for the enzyme is believed to be ubiquinone (By similarity).</text>
</comment>
<comment type="catalytic activity">
    <reaction>
        <text>a ubiquinone + NADH + 5 H(+)(in) = a ubiquinol + NAD(+) + 4 H(+)(out)</text>
        <dbReference type="Rhea" id="RHEA:29091"/>
        <dbReference type="Rhea" id="RHEA-COMP:9565"/>
        <dbReference type="Rhea" id="RHEA-COMP:9566"/>
        <dbReference type="ChEBI" id="CHEBI:15378"/>
        <dbReference type="ChEBI" id="CHEBI:16389"/>
        <dbReference type="ChEBI" id="CHEBI:17976"/>
        <dbReference type="ChEBI" id="CHEBI:57540"/>
        <dbReference type="ChEBI" id="CHEBI:57945"/>
        <dbReference type="EC" id="7.1.1.2"/>
    </reaction>
</comment>
<comment type="subcellular location">
    <subcellularLocation>
        <location evidence="1">Mitochondrion membrane</location>
        <topology evidence="1">Multi-pass membrane protein</topology>
    </subcellularLocation>
</comment>
<comment type="similarity">
    <text evidence="3">Belongs to the complex I subunit 3 family.</text>
</comment>
<keyword id="KW-0249">Electron transport</keyword>
<keyword id="KW-0472">Membrane</keyword>
<keyword id="KW-0496">Mitochondrion</keyword>
<keyword id="KW-0520">NAD</keyword>
<keyword id="KW-1185">Reference proteome</keyword>
<keyword id="KW-0679">Respiratory chain</keyword>
<keyword id="KW-1278">Translocase</keyword>
<keyword id="KW-0812">Transmembrane</keyword>
<keyword id="KW-1133">Transmembrane helix</keyword>
<keyword id="KW-0813">Transport</keyword>
<keyword id="KW-0830">Ubiquinone</keyword>
<gene>
    <name type="primary">MT-ND3</name>
    <name type="synonym">MTND3</name>
    <name type="synonym">NADH3</name>
    <name type="synonym">ND3</name>
</gene>
<geneLocation type="mitochondrion"/>
<name>NU3M_SALTR</name>
<evidence type="ECO:0000250" key="1"/>
<evidence type="ECO:0000255" key="2"/>
<evidence type="ECO:0000305" key="3"/>